<evidence type="ECO:0000255" key="1">
    <source>
        <dbReference type="HAMAP-Rule" id="MF_00909"/>
    </source>
</evidence>
<evidence type="ECO:0000256" key="2">
    <source>
        <dbReference type="SAM" id="MobiDB-lite"/>
    </source>
</evidence>
<evidence type="ECO:0000305" key="3"/>
<gene>
    <name evidence="1" type="primary">ftsZ</name>
    <name type="ordered locus">EF_0997</name>
</gene>
<reference key="1">
    <citation type="journal article" date="1997" name="J. Bacteriol.">
        <title>Identification and characterization of cell wall-cell division gene clusters in pathogenic Gram-positive cocci.</title>
        <authorList>
            <person name="Pucci M.J."/>
            <person name="Thanassi J.A."/>
            <person name="Discotto L.F."/>
            <person name="Kessler R.E."/>
            <person name="Dougherty T.J."/>
        </authorList>
    </citation>
    <scope>NUCLEOTIDE SEQUENCE [GENOMIC DNA]</scope>
    <source>
        <strain>A24836</strain>
    </source>
</reference>
<reference key="2">
    <citation type="journal article" date="2003" name="Science">
        <title>Role of mobile DNA in the evolution of vancomycin-resistant Enterococcus faecalis.</title>
        <authorList>
            <person name="Paulsen I.T."/>
            <person name="Banerjei L."/>
            <person name="Myers G.S.A."/>
            <person name="Nelson K.E."/>
            <person name="Seshadri R."/>
            <person name="Read T.D."/>
            <person name="Fouts D.E."/>
            <person name="Eisen J.A."/>
            <person name="Gill S.R."/>
            <person name="Heidelberg J.F."/>
            <person name="Tettelin H."/>
            <person name="Dodson R.J."/>
            <person name="Umayam L.A."/>
            <person name="Brinkac L.M."/>
            <person name="Beanan M.J."/>
            <person name="Daugherty S.C."/>
            <person name="DeBoy R.T."/>
            <person name="Durkin S.A."/>
            <person name="Kolonay J.F."/>
            <person name="Madupu R."/>
            <person name="Nelson W.C."/>
            <person name="Vamathevan J.J."/>
            <person name="Tran B."/>
            <person name="Upton J."/>
            <person name="Hansen T."/>
            <person name="Shetty J."/>
            <person name="Khouri H.M."/>
            <person name="Utterback T.R."/>
            <person name="Radune D."/>
            <person name="Ketchum K.A."/>
            <person name="Dougherty B.A."/>
            <person name="Fraser C.M."/>
        </authorList>
    </citation>
    <scope>NUCLEOTIDE SEQUENCE [LARGE SCALE GENOMIC DNA]</scope>
    <source>
        <strain>ATCC 700802 / V583</strain>
    </source>
</reference>
<proteinExistence type="inferred from homology"/>
<comment type="function">
    <text evidence="1">Essential cell division protein that forms a contractile ring structure (Z ring) at the future cell division site. The regulation of the ring assembly controls the timing and the location of cell division. One of the functions of the FtsZ ring is to recruit other cell division proteins to the septum to produce a new cell wall between the dividing cells. Binds GTP and shows GTPase activity.</text>
</comment>
<comment type="subunit">
    <text evidence="1">Homodimer. Polymerizes to form a dynamic ring structure in a strictly GTP-dependent manner. Interacts directly with several other division proteins.</text>
</comment>
<comment type="subcellular location">
    <subcellularLocation>
        <location evidence="1">Cytoplasm</location>
    </subcellularLocation>
    <text evidence="1">Assembles at midcell at the inner surface of the cytoplasmic membrane.</text>
</comment>
<comment type="similarity">
    <text evidence="1">Belongs to the FtsZ family.</text>
</comment>
<protein>
    <recommendedName>
        <fullName evidence="1">Cell division protein FtsZ</fullName>
    </recommendedName>
</protein>
<accession>O08439</accession>
<name>FTSZ_ENTFA</name>
<feature type="chain" id="PRO_0000114353" description="Cell division protein FtsZ">
    <location>
        <begin position="1"/>
        <end position="410"/>
    </location>
</feature>
<feature type="region of interest" description="Disordered" evidence="2">
    <location>
        <begin position="318"/>
        <end position="410"/>
    </location>
</feature>
<feature type="compositionally biased region" description="Polar residues" evidence="2">
    <location>
        <begin position="330"/>
        <end position="344"/>
    </location>
</feature>
<feature type="compositionally biased region" description="Basic and acidic residues" evidence="2">
    <location>
        <begin position="360"/>
        <end position="398"/>
    </location>
</feature>
<feature type="binding site" evidence="1">
    <location>
        <begin position="22"/>
        <end position="26"/>
    </location>
    <ligand>
        <name>GTP</name>
        <dbReference type="ChEBI" id="CHEBI:37565"/>
    </ligand>
</feature>
<feature type="binding site" evidence="1">
    <location>
        <begin position="109"/>
        <end position="111"/>
    </location>
    <ligand>
        <name>GTP</name>
        <dbReference type="ChEBI" id="CHEBI:37565"/>
    </ligand>
</feature>
<feature type="binding site" evidence="1">
    <location>
        <position position="140"/>
    </location>
    <ligand>
        <name>GTP</name>
        <dbReference type="ChEBI" id="CHEBI:37565"/>
    </ligand>
</feature>
<feature type="binding site" evidence="1">
    <location>
        <position position="144"/>
    </location>
    <ligand>
        <name>GTP</name>
        <dbReference type="ChEBI" id="CHEBI:37565"/>
    </ligand>
</feature>
<feature type="binding site" evidence="1">
    <location>
        <position position="188"/>
    </location>
    <ligand>
        <name>GTP</name>
        <dbReference type="ChEBI" id="CHEBI:37565"/>
    </ligand>
</feature>
<feature type="sequence conflict" description="In Ref. 1; AAC45639." evidence="3" ref="1">
    <original>G</original>
    <variation>N</variation>
    <location>
        <position position="69"/>
    </location>
</feature>
<feature type="sequence conflict" description="In Ref. 1; AAC45639." evidence="3" ref="1">
    <original>HRQTRQAVQPMQQTTQSVEMDQPKSQEEASAFGDWDIRREQNTRPKVDES</original>
    <variation>LTPSNKTSGSHQCNKQLNLWKWINQNHKKKQVLLAIGIFAENKIHVQKLMNL</variation>
    <location>
        <begin position="326"/>
        <end position="375"/>
    </location>
</feature>
<organism>
    <name type="scientific">Enterococcus faecalis (strain ATCC 700802 / V583)</name>
    <dbReference type="NCBI Taxonomy" id="226185"/>
    <lineage>
        <taxon>Bacteria</taxon>
        <taxon>Bacillati</taxon>
        <taxon>Bacillota</taxon>
        <taxon>Bacilli</taxon>
        <taxon>Lactobacillales</taxon>
        <taxon>Enterococcaceae</taxon>
        <taxon>Enterococcus</taxon>
    </lineage>
</organism>
<sequence length="410" mass="44148">MEFSLDNNINNGAVIKVIGVGGGGGNAVNRMIEENVKGVEFITANTDVQALKHSKAETVIQLGPKYTRGLGAGSQPEVGQKAAEESEQVISESLQGADMIFITAGMGGGTGTGAAPVVAKIAKELGALTVGVVTRPFSFEGPKRGRFAAEGIALLKENVDTLLIISNNRLLEVVDKKTPMLEAFREADNVLRQGVQGISDLITAPGYVNLDFADVKTVMENQGTALMGIGVASGEERVIEATKKAISSPLLETSIDGAEQVLLNITGGLDMTLFEAQDASDIVTNAASGDVNIILGTSINEDLGDEIRVTVIATGIDESKKDRKPHRQTRQAVQPMQQTTQSVEMDQPKSQEEASAFGDWDIRREQNTRPKVDESSLEQVDKKEFDTFHREEPNHNDDELSTPPFFRRKR</sequence>
<dbReference type="EMBL" id="U94707">
    <property type="protein sequence ID" value="AAC45639.1"/>
    <property type="molecule type" value="Genomic_DNA"/>
</dbReference>
<dbReference type="EMBL" id="AE016830">
    <property type="protein sequence ID" value="AAO80803.1"/>
    <property type="molecule type" value="Genomic_DNA"/>
</dbReference>
<dbReference type="RefSeq" id="NP_814733.1">
    <property type="nucleotide sequence ID" value="NC_004668.1"/>
</dbReference>
<dbReference type="RefSeq" id="WP_002355899.1">
    <property type="nucleotide sequence ID" value="NZ_KE136527.1"/>
</dbReference>
<dbReference type="SMR" id="O08439"/>
<dbReference type="STRING" id="226185.EF_0997"/>
<dbReference type="EnsemblBacteria" id="AAO80803">
    <property type="protein sequence ID" value="AAO80803"/>
    <property type="gene ID" value="EF_0997"/>
</dbReference>
<dbReference type="GeneID" id="60893384"/>
<dbReference type="KEGG" id="efa:EF0997"/>
<dbReference type="PATRIC" id="fig|226185.45.peg.3203"/>
<dbReference type="eggNOG" id="COG0206">
    <property type="taxonomic scope" value="Bacteria"/>
</dbReference>
<dbReference type="HOGENOM" id="CLU_024865_1_1_9"/>
<dbReference type="Proteomes" id="UP000001415">
    <property type="component" value="Chromosome"/>
</dbReference>
<dbReference type="GO" id="GO:0032153">
    <property type="term" value="C:cell division site"/>
    <property type="evidence" value="ECO:0007669"/>
    <property type="project" value="UniProtKB-UniRule"/>
</dbReference>
<dbReference type="GO" id="GO:0005737">
    <property type="term" value="C:cytoplasm"/>
    <property type="evidence" value="ECO:0007669"/>
    <property type="project" value="UniProtKB-SubCell"/>
</dbReference>
<dbReference type="GO" id="GO:0005525">
    <property type="term" value="F:GTP binding"/>
    <property type="evidence" value="ECO:0007669"/>
    <property type="project" value="UniProtKB-UniRule"/>
</dbReference>
<dbReference type="GO" id="GO:0003924">
    <property type="term" value="F:GTPase activity"/>
    <property type="evidence" value="ECO:0007669"/>
    <property type="project" value="UniProtKB-UniRule"/>
</dbReference>
<dbReference type="GO" id="GO:0000917">
    <property type="term" value="P:division septum assembly"/>
    <property type="evidence" value="ECO:0007669"/>
    <property type="project" value="UniProtKB-KW"/>
</dbReference>
<dbReference type="GO" id="GO:0043093">
    <property type="term" value="P:FtsZ-dependent cytokinesis"/>
    <property type="evidence" value="ECO:0007669"/>
    <property type="project" value="UniProtKB-UniRule"/>
</dbReference>
<dbReference type="GO" id="GO:0051258">
    <property type="term" value="P:protein polymerization"/>
    <property type="evidence" value="ECO:0007669"/>
    <property type="project" value="UniProtKB-UniRule"/>
</dbReference>
<dbReference type="CDD" id="cd02201">
    <property type="entry name" value="FtsZ_type1"/>
    <property type="match status" value="1"/>
</dbReference>
<dbReference type="FunFam" id="3.40.50.1440:FF:000023">
    <property type="entry name" value="Cell division protein FtsZ"/>
    <property type="match status" value="1"/>
</dbReference>
<dbReference type="Gene3D" id="3.30.1330.20">
    <property type="entry name" value="Tubulin/FtsZ, C-terminal domain"/>
    <property type="match status" value="1"/>
</dbReference>
<dbReference type="Gene3D" id="3.40.50.1440">
    <property type="entry name" value="Tubulin/FtsZ, GTPase domain"/>
    <property type="match status" value="1"/>
</dbReference>
<dbReference type="HAMAP" id="MF_00909">
    <property type="entry name" value="FtsZ"/>
    <property type="match status" value="1"/>
</dbReference>
<dbReference type="InterPro" id="IPR000158">
    <property type="entry name" value="Cell_div_FtsZ"/>
</dbReference>
<dbReference type="InterPro" id="IPR020805">
    <property type="entry name" value="Cell_div_FtsZ_CS"/>
</dbReference>
<dbReference type="InterPro" id="IPR045061">
    <property type="entry name" value="FtsZ/CetZ"/>
</dbReference>
<dbReference type="InterPro" id="IPR024757">
    <property type="entry name" value="FtsZ_C"/>
</dbReference>
<dbReference type="InterPro" id="IPR008280">
    <property type="entry name" value="Tub_FtsZ_C"/>
</dbReference>
<dbReference type="InterPro" id="IPR037103">
    <property type="entry name" value="Tubulin/FtsZ-like_C"/>
</dbReference>
<dbReference type="InterPro" id="IPR018316">
    <property type="entry name" value="Tubulin/FtsZ_2-layer-sand-dom"/>
</dbReference>
<dbReference type="InterPro" id="IPR036525">
    <property type="entry name" value="Tubulin/FtsZ_GTPase_sf"/>
</dbReference>
<dbReference type="InterPro" id="IPR003008">
    <property type="entry name" value="Tubulin_FtsZ_GTPase"/>
</dbReference>
<dbReference type="NCBIfam" id="TIGR00065">
    <property type="entry name" value="ftsZ"/>
    <property type="match status" value="1"/>
</dbReference>
<dbReference type="PANTHER" id="PTHR30314">
    <property type="entry name" value="CELL DIVISION PROTEIN FTSZ-RELATED"/>
    <property type="match status" value="1"/>
</dbReference>
<dbReference type="PANTHER" id="PTHR30314:SF3">
    <property type="entry name" value="MITOCHONDRIAL DIVISION PROTEIN FSZA"/>
    <property type="match status" value="1"/>
</dbReference>
<dbReference type="Pfam" id="PF12327">
    <property type="entry name" value="FtsZ_C"/>
    <property type="match status" value="1"/>
</dbReference>
<dbReference type="Pfam" id="PF00091">
    <property type="entry name" value="Tubulin"/>
    <property type="match status" value="1"/>
</dbReference>
<dbReference type="PRINTS" id="PR00423">
    <property type="entry name" value="CELLDVISFTSZ"/>
</dbReference>
<dbReference type="SMART" id="SM00864">
    <property type="entry name" value="Tubulin"/>
    <property type="match status" value="1"/>
</dbReference>
<dbReference type="SMART" id="SM00865">
    <property type="entry name" value="Tubulin_C"/>
    <property type="match status" value="1"/>
</dbReference>
<dbReference type="SUPFAM" id="SSF55307">
    <property type="entry name" value="Tubulin C-terminal domain-like"/>
    <property type="match status" value="1"/>
</dbReference>
<dbReference type="SUPFAM" id="SSF52490">
    <property type="entry name" value="Tubulin nucleotide-binding domain-like"/>
    <property type="match status" value="1"/>
</dbReference>
<dbReference type="PROSITE" id="PS01134">
    <property type="entry name" value="FTSZ_1"/>
    <property type="match status" value="1"/>
</dbReference>
<dbReference type="PROSITE" id="PS01135">
    <property type="entry name" value="FTSZ_2"/>
    <property type="match status" value="1"/>
</dbReference>
<keyword id="KW-0131">Cell cycle</keyword>
<keyword id="KW-0132">Cell division</keyword>
<keyword id="KW-0963">Cytoplasm</keyword>
<keyword id="KW-0342">GTP-binding</keyword>
<keyword id="KW-0547">Nucleotide-binding</keyword>
<keyword id="KW-1185">Reference proteome</keyword>
<keyword id="KW-0717">Septation</keyword>